<evidence type="ECO:0000250" key="1"/>
<evidence type="ECO:0000250" key="2">
    <source>
        <dbReference type="UniProtKB" id="P01900"/>
    </source>
</evidence>
<evidence type="ECO:0000255" key="3"/>
<evidence type="ECO:0000255" key="4">
    <source>
        <dbReference type="PROSITE-ProRule" id="PRU00114"/>
    </source>
</evidence>
<evidence type="ECO:0000256" key="5">
    <source>
        <dbReference type="SAM" id="MobiDB-lite"/>
    </source>
</evidence>
<evidence type="ECO:0000305" key="6"/>
<dbReference type="EMBL" id="K02441">
    <property type="protein sequence ID" value="AAA98729.1"/>
    <property type="molecule type" value="mRNA"/>
</dbReference>
<dbReference type="PIR" id="A02193">
    <property type="entry name" value="HLRB"/>
</dbReference>
<dbReference type="RefSeq" id="NP_001164741.1">
    <property type="nucleotide sequence ID" value="NM_001171270.1"/>
</dbReference>
<dbReference type="RefSeq" id="XP_069930388.1">
    <property type="nucleotide sequence ID" value="XM_070074287.1"/>
</dbReference>
<dbReference type="RefSeq" id="XP_069930389.1">
    <property type="nucleotide sequence ID" value="XM_070074288.1"/>
</dbReference>
<dbReference type="RefSeq" id="XP_069930390.1">
    <property type="nucleotide sequence ID" value="XM_070074289.1"/>
</dbReference>
<dbReference type="SMR" id="P01894"/>
<dbReference type="FunCoup" id="P01894">
    <property type="interactions" value="236"/>
</dbReference>
<dbReference type="GeneID" id="100328967"/>
<dbReference type="KEGG" id="ocu:100328967"/>
<dbReference type="InParanoid" id="P01894"/>
<dbReference type="OrthoDB" id="8936120at2759"/>
<dbReference type="Proteomes" id="UP000001811">
    <property type="component" value="Unplaced"/>
</dbReference>
<dbReference type="GO" id="GO:0009897">
    <property type="term" value="C:external side of plasma membrane"/>
    <property type="evidence" value="ECO:0007669"/>
    <property type="project" value="TreeGrafter"/>
</dbReference>
<dbReference type="GO" id="GO:0005615">
    <property type="term" value="C:extracellular space"/>
    <property type="evidence" value="ECO:0007669"/>
    <property type="project" value="TreeGrafter"/>
</dbReference>
<dbReference type="GO" id="GO:0098553">
    <property type="term" value="C:lumenal side of endoplasmic reticulum membrane"/>
    <property type="evidence" value="ECO:0007669"/>
    <property type="project" value="UniProtKB-ARBA"/>
</dbReference>
<dbReference type="GO" id="GO:0042612">
    <property type="term" value="C:MHC class I protein complex"/>
    <property type="evidence" value="ECO:0007669"/>
    <property type="project" value="UniProtKB-KW"/>
</dbReference>
<dbReference type="GO" id="GO:0030670">
    <property type="term" value="C:phagocytic vesicle membrane"/>
    <property type="evidence" value="ECO:0007669"/>
    <property type="project" value="UniProtKB-ARBA"/>
</dbReference>
<dbReference type="GO" id="GO:0042605">
    <property type="term" value="F:peptide antigen binding"/>
    <property type="evidence" value="ECO:0007669"/>
    <property type="project" value="TreeGrafter"/>
</dbReference>
<dbReference type="GO" id="GO:0005102">
    <property type="term" value="F:signaling receptor binding"/>
    <property type="evidence" value="ECO:0007669"/>
    <property type="project" value="TreeGrafter"/>
</dbReference>
<dbReference type="GO" id="GO:0002486">
    <property type="term" value="P:antigen processing and presentation of endogenous peptide antigen via MHC class I via ER pathway, TAP-independent"/>
    <property type="evidence" value="ECO:0007669"/>
    <property type="project" value="TreeGrafter"/>
</dbReference>
<dbReference type="GO" id="GO:0002476">
    <property type="term" value="P:antigen processing and presentation of endogenous peptide antigen via MHC class Ib"/>
    <property type="evidence" value="ECO:0007669"/>
    <property type="project" value="TreeGrafter"/>
</dbReference>
<dbReference type="GO" id="GO:0006955">
    <property type="term" value="P:immune response"/>
    <property type="evidence" value="ECO:0007669"/>
    <property type="project" value="InterPro"/>
</dbReference>
<dbReference type="GO" id="GO:0001916">
    <property type="term" value="P:positive regulation of T cell mediated cytotoxicity"/>
    <property type="evidence" value="ECO:0007669"/>
    <property type="project" value="TreeGrafter"/>
</dbReference>
<dbReference type="CDD" id="cd07698">
    <property type="entry name" value="IgC1_MHC_I_alpha3"/>
    <property type="match status" value="1"/>
</dbReference>
<dbReference type="CDD" id="cd12087">
    <property type="entry name" value="TM_EGFR-like"/>
    <property type="match status" value="1"/>
</dbReference>
<dbReference type="FunFam" id="2.60.40.10:FF:000014">
    <property type="entry name" value="H-2 class I histocompatibility antigen, alpha chain"/>
    <property type="match status" value="1"/>
</dbReference>
<dbReference type="FunFam" id="3.30.500.10:FF:000001">
    <property type="entry name" value="H-2 class I histocompatibility antigen, alpha chain"/>
    <property type="match status" value="1"/>
</dbReference>
<dbReference type="Gene3D" id="2.60.40.10">
    <property type="entry name" value="Immunoglobulins"/>
    <property type="match status" value="1"/>
</dbReference>
<dbReference type="Gene3D" id="3.30.500.10">
    <property type="entry name" value="MHC class I-like antigen recognition-like"/>
    <property type="match status" value="1"/>
</dbReference>
<dbReference type="InterPro" id="IPR007110">
    <property type="entry name" value="Ig-like_dom"/>
</dbReference>
<dbReference type="InterPro" id="IPR036179">
    <property type="entry name" value="Ig-like_dom_sf"/>
</dbReference>
<dbReference type="InterPro" id="IPR013783">
    <property type="entry name" value="Ig-like_fold"/>
</dbReference>
<dbReference type="InterPro" id="IPR003006">
    <property type="entry name" value="Ig/MHC_CS"/>
</dbReference>
<dbReference type="InterPro" id="IPR003597">
    <property type="entry name" value="Ig_C1-set"/>
</dbReference>
<dbReference type="InterPro" id="IPR050208">
    <property type="entry name" value="MHC_class-I_related"/>
</dbReference>
<dbReference type="InterPro" id="IPR011161">
    <property type="entry name" value="MHC_I-like_Ag-recog"/>
</dbReference>
<dbReference type="InterPro" id="IPR037055">
    <property type="entry name" value="MHC_I-like_Ag-recog_sf"/>
</dbReference>
<dbReference type="InterPro" id="IPR011162">
    <property type="entry name" value="MHC_I/II-like_Ag-recog"/>
</dbReference>
<dbReference type="InterPro" id="IPR001039">
    <property type="entry name" value="MHC_I_a_a1/a2"/>
</dbReference>
<dbReference type="InterPro" id="IPR010579">
    <property type="entry name" value="MHC_I_a_C"/>
</dbReference>
<dbReference type="PANTHER" id="PTHR16675:SF251">
    <property type="entry name" value="HLA CLASS I HISTOCOMPATIBILITY ANTIGEN, C ALPHA CHAIN"/>
    <property type="match status" value="1"/>
</dbReference>
<dbReference type="PANTHER" id="PTHR16675">
    <property type="entry name" value="MHC CLASS I-RELATED"/>
    <property type="match status" value="1"/>
</dbReference>
<dbReference type="Pfam" id="PF07654">
    <property type="entry name" value="C1-set"/>
    <property type="match status" value="1"/>
</dbReference>
<dbReference type="Pfam" id="PF00129">
    <property type="entry name" value="MHC_I"/>
    <property type="match status" value="1"/>
</dbReference>
<dbReference type="Pfam" id="PF06623">
    <property type="entry name" value="MHC_I_C"/>
    <property type="match status" value="1"/>
</dbReference>
<dbReference type="PRINTS" id="PR01638">
    <property type="entry name" value="MHCCLASSI"/>
</dbReference>
<dbReference type="SMART" id="SM00407">
    <property type="entry name" value="IGc1"/>
    <property type="match status" value="1"/>
</dbReference>
<dbReference type="SUPFAM" id="SSF48726">
    <property type="entry name" value="Immunoglobulin"/>
    <property type="match status" value="1"/>
</dbReference>
<dbReference type="SUPFAM" id="SSF54452">
    <property type="entry name" value="MHC antigen-recognition domain"/>
    <property type="match status" value="1"/>
</dbReference>
<dbReference type="PROSITE" id="PS50835">
    <property type="entry name" value="IG_LIKE"/>
    <property type="match status" value="1"/>
</dbReference>
<dbReference type="PROSITE" id="PS00290">
    <property type="entry name" value="IG_MHC"/>
    <property type="match status" value="1"/>
</dbReference>
<proteinExistence type="evidence at transcript level"/>
<sequence>MGSMAPRTLLLLLAGALTLKDTQAGSHSMRYFYTSVSRPGLGEPRFIIVGYVDDTQFVRFDSDAASPRMEQRAPWMGQVEPEYWDQQTQIAKDTAQTFRVNLNTALRYYNQSAAGSHTFQTMFGCEVWADGRFFHGYRQYAYDGADYIALNEDLRSWTAADTAAQNTQRKWEAAGEAERHRAYLERECVEWLRRYLEMGKETLQRADPPKAHVTHHPASDREATLRCWALGFYPAEISLTWQRDGEDQTQDTELVETRPGGDGTFQKWAAVVVPSGEEQRYTCRVQHEGLPEPLTLTWEPPAQPTALIVGIVAGVLGVLLILGAVVAVVRRKKHSSDGKGGRYTPAAGGHRDQGSDDSLMP</sequence>
<name>HA1A_RABIT</name>
<comment type="function">
    <text>Involved in the presentation of foreign antigens to the immune system.</text>
</comment>
<comment type="subunit">
    <text>Heterodimer of an alpha chain and a beta chain (beta-2-microglobulin).</text>
</comment>
<comment type="subcellular location">
    <subcellularLocation>
        <location>Membrane</location>
        <topology>Single-pass type I membrane protein</topology>
    </subcellularLocation>
</comment>
<comment type="similarity">
    <text evidence="6">Belongs to the MHC class I family.</text>
</comment>
<reference key="1">
    <citation type="journal article" date="1984" name="J. Immunol.">
        <title>Rabbit class I MHC genes: cDNA clones define full-length transcripts of an expressed gene and a putative pseudogene.</title>
        <authorList>
            <person name="Tykocinski M.L."/>
            <person name="Marche P.N."/>
            <person name="Max E.E."/>
            <person name="Kindt T.J."/>
        </authorList>
    </citation>
    <scope>NUCLEOTIDE SEQUENCE [MRNA]</scope>
</reference>
<feature type="signal peptide" evidence="3">
    <location>
        <begin position="1"/>
        <end position="24"/>
    </location>
</feature>
<feature type="chain" id="PRO_0000018941" description="RLA class I histocompatibility antigen, alpha chain 11/11">
    <location>
        <begin position="25"/>
        <end position="361"/>
    </location>
</feature>
<feature type="topological domain" description="Extracellular" evidence="3">
    <location>
        <begin position="25"/>
        <end position="308"/>
    </location>
</feature>
<feature type="transmembrane region" description="Helical" evidence="3">
    <location>
        <begin position="309"/>
        <end position="329"/>
    </location>
</feature>
<feature type="topological domain" description="Cytoplasmic" evidence="3">
    <location>
        <begin position="330"/>
        <end position="361"/>
    </location>
</feature>
<feature type="domain" description="Ig-like C1-type">
    <location>
        <begin position="209"/>
        <end position="297"/>
    </location>
</feature>
<feature type="region of interest" description="Alpha-1">
    <location>
        <begin position="25"/>
        <end position="114"/>
    </location>
</feature>
<feature type="region of interest" description="Alpha-2">
    <location>
        <begin position="115"/>
        <end position="206"/>
    </location>
</feature>
<feature type="region of interest" description="Alpha-3">
    <location>
        <begin position="207"/>
        <end position="298"/>
    </location>
</feature>
<feature type="region of interest" description="Connecting peptide">
    <location>
        <begin position="299"/>
        <end position="308"/>
    </location>
</feature>
<feature type="region of interest" description="Disordered" evidence="5">
    <location>
        <begin position="335"/>
        <end position="361"/>
    </location>
</feature>
<feature type="modified residue" description="Phosphoserine" evidence="2">
    <location>
        <position position="355"/>
    </location>
</feature>
<feature type="modified residue" description="Phosphoserine" evidence="2">
    <location>
        <position position="358"/>
    </location>
</feature>
<feature type="glycosylation site" description="N-linked (GlcNAc...) asparagine" evidence="1">
    <location>
        <position position="110"/>
    </location>
</feature>
<feature type="disulfide bond" evidence="4">
    <location>
        <begin position="125"/>
        <end position="188"/>
    </location>
</feature>
<feature type="disulfide bond" evidence="4">
    <location>
        <begin position="227"/>
        <end position="283"/>
    </location>
</feature>
<keyword id="KW-1015">Disulfide bond</keyword>
<keyword id="KW-0325">Glycoprotein</keyword>
<keyword id="KW-0391">Immunity</keyword>
<keyword id="KW-0472">Membrane</keyword>
<keyword id="KW-0490">MHC I</keyword>
<keyword id="KW-0597">Phosphoprotein</keyword>
<keyword id="KW-1185">Reference proteome</keyword>
<keyword id="KW-0732">Signal</keyword>
<keyword id="KW-0812">Transmembrane</keyword>
<keyword id="KW-1133">Transmembrane helix</keyword>
<accession>P01894</accession>
<protein>
    <recommendedName>
        <fullName>RLA class I histocompatibility antigen, alpha chain 11/11</fullName>
    </recommendedName>
</protein>
<organism>
    <name type="scientific">Oryctolagus cuniculus</name>
    <name type="common">Rabbit</name>
    <dbReference type="NCBI Taxonomy" id="9986"/>
    <lineage>
        <taxon>Eukaryota</taxon>
        <taxon>Metazoa</taxon>
        <taxon>Chordata</taxon>
        <taxon>Craniata</taxon>
        <taxon>Vertebrata</taxon>
        <taxon>Euteleostomi</taxon>
        <taxon>Mammalia</taxon>
        <taxon>Eutheria</taxon>
        <taxon>Euarchontoglires</taxon>
        <taxon>Glires</taxon>
        <taxon>Lagomorpha</taxon>
        <taxon>Leporidae</taxon>
        <taxon>Oryctolagus</taxon>
    </lineage>
</organism>